<sequence>MQEKDASSQGFLPHFQHFATQAIHVGQEPEQWTSRAVVPLISLSTTFKQAAPGQHSGFEYSRSGNPTRNCLEKAVAALDGAKYCLAFASGLAATVTITHLLKAGDQIICMDDVYGGTNRYFRQVASEFGLKISFVDCSKIKLLEAAITPETKLVWIETPTNPVLKMIDIEACAHIVHKRGDIILVVDNTFMSPYFQRPLALGADICMCSATKYMNGHSDVVMGLVSVNCERLHNRLRFLQNSLGAVPSPLDCYLCNRGLKTLHVRMEKHFKNGMAVAQFLESNPGVEKVIYPGLPSHPQHELAKRQCTGCTGMITFYIKGTLQHAEIFLKNLKLFTLAESLGGFESLVELPAIMTHASVPKNDRDVLGISDTLIRLSVGLEDEKDLLEDLDQALKAAHPPSGSHD</sequence>
<keyword id="KW-0028">Amino-acid biosynthesis</keyword>
<keyword id="KW-0112">Calmodulin-binding</keyword>
<keyword id="KW-0198">Cysteine biosynthesis</keyword>
<keyword id="KW-0963">Cytoplasm</keyword>
<keyword id="KW-0443">Lipid metabolism</keyword>
<keyword id="KW-0456">Lyase</keyword>
<keyword id="KW-0663">Pyridoxal phosphate</keyword>
<keyword id="KW-1185">Reference proteome</keyword>
<gene>
    <name type="primary">CTH</name>
    <name type="ORF">QccE-22305</name>
</gene>
<protein>
    <recommendedName>
        <fullName>Cystathionine gamma-lyase</fullName>
        <shortName>CGL</shortName>
        <shortName>CSE</shortName>
        <ecNumber evidence="3">4.4.1.1</ecNumber>
    </recommendedName>
    <alternativeName>
        <fullName>Cysteine desulfhydrase</fullName>
    </alternativeName>
    <alternativeName>
        <fullName>Cysteine-protein sulfhydrase</fullName>
    </alternativeName>
    <alternativeName>
        <fullName>Gamma-cystathionase</fullName>
    </alternativeName>
    <alternativeName>
        <fullName>Homocysteine desulfhydrase</fullName>
        <ecNumber evidence="3">4.4.1.2</ecNumber>
    </alternativeName>
</protein>
<comment type="function">
    <text evidence="2 3 4">Catalyzes the last step in the trans-sulfuration pathway from L-methionine to L-cysteine in a pyridoxal-5'-phosphate (PLP)-dependent manner, which consists on cleaving the L,L-cystathionine molecule into L-cysteine, ammonia and 2-oxobutanoate. Part of the L-cysteine derived from the trans-sulfuration pathway is utilized for biosynthesis of the ubiquitous antioxidant glutathione. Besides its role in the conversion of L-cystathionine into L-cysteine, it utilizes L-cysteine and L-homocysteine as substrates (at much lower rates than L,L-cystathionine) to produce hydrogen sulfide (H2S). In vitro, it converts two L-cysteine molecules into lanthionine and H2S, and two L-homocysteine molecules to homolanthionine and H2S, which can be particularly relevant under conditions of severe hyperhomocysteinemia. Lanthionine and homolanthionine are structural homologs of L,L-cystathionine that differ by the absence or presence of an extra methylene group, respectively. Acts as a cysteine-protein sulfhydrase by mediating sulfhydration of target proteins: sulfhydration consists of converting -SH groups into -SSH on specific cysteine residues of target proteins such as GAPDH, PTPN1 and NF-kappa-B subunit RELA, thereby regulating their function. By generating the gasotransmitter H2S, it participates in a number of physiological processes such as vasodilation, bone protection, and inflammation (By similarity). Plays an essential role in myogenesis by contributing to the biogenesis of H2S in skeletal muscle tissue (By similarity). Can also accept homoserine as substrate (By similarity). Catalyzes the elimination of selenocystathionine (which can be derived from the diet) to yield selenocysteine, ammonia and 2-oxobutanoate (By similarity).</text>
</comment>
<comment type="catalytic activity">
    <reaction evidence="3">
        <text>L,L-cystathionine + H2O = 2-oxobutanoate + L-cysteine + NH4(+)</text>
        <dbReference type="Rhea" id="RHEA:14005"/>
        <dbReference type="ChEBI" id="CHEBI:15377"/>
        <dbReference type="ChEBI" id="CHEBI:16763"/>
        <dbReference type="ChEBI" id="CHEBI:28938"/>
        <dbReference type="ChEBI" id="CHEBI:35235"/>
        <dbReference type="ChEBI" id="CHEBI:58161"/>
        <dbReference type="EC" id="4.4.1.1"/>
    </reaction>
    <physiologicalReaction direction="left-to-right" evidence="3">
        <dbReference type="Rhea" id="RHEA:14006"/>
    </physiologicalReaction>
</comment>
<comment type="catalytic activity">
    <reaction evidence="3">
        <text>L-cysteine + H2O = hydrogen sulfide + pyruvate + NH4(+) + H(+)</text>
        <dbReference type="Rhea" id="RHEA:24931"/>
        <dbReference type="ChEBI" id="CHEBI:15361"/>
        <dbReference type="ChEBI" id="CHEBI:15377"/>
        <dbReference type="ChEBI" id="CHEBI:15378"/>
        <dbReference type="ChEBI" id="CHEBI:28938"/>
        <dbReference type="ChEBI" id="CHEBI:29919"/>
        <dbReference type="ChEBI" id="CHEBI:35235"/>
        <dbReference type="EC" id="4.4.1.1"/>
    </reaction>
    <physiologicalReaction direction="left-to-right" evidence="3">
        <dbReference type="Rhea" id="RHEA:24932"/>
    </physiologicalReaction>
</comment>
<comment type="catalytic activity">
    <reaction evidence="3">
        <text>L-homocysteine + H2O = 2-oxobutanoate + hydrogen sulfide + NH4(+) + H(+)</text>
        <dbReference type="Rhea" id="RHEA:14501"/>
        <dbReference type="ChEBI" id="CHEBI:15377"/>
        <dbReference type="ChEBI" id="CHEBI:15378"/>
        <dbReference type="ChEBI" id="CHEBI:16763"/>
        <dbReference type="ChEBI" id="CHEBI:28938"/>
        <dbReference type="ChEBI" id="CHEBI:29919"/>
        <dbReference type="ChEBI" id="CHEBI:58199"/>
        <dbReference type="EC" id="4.4.1.2"/>
    </reaction>
    <physiologicalReaction direction="left-to-right" evidence="3">
        <dbReference type="Rhea" id="RHEA:14502"/>
    </physiologicalReaction>
</comment>
<comment type="catalytic activity">
    <reaction evidence="2">
        <text>L-homoserine = 2-oxobutanoate + NH4(+)</text>
        <dbReference type="Rhea" id="RHEA:24923"/>
        <dbReference type="ChEBI" id="CHEBI:16763"/>
        <dbReference type="ChEBI" id="CHEBI:28938"/>
        <dbReference type="ChEBI" id="CHEBI:57476"/>
        <dbReference type="EC" id="4.4.1.1"/>
    </reaction>
    <physiologicalReaction direction="left-to-right" evidence="2">
        <dbReference type="Rhea" id="RHEA:24924"/>
    </physiologicalReaction>
</comment>
<comment type="catalytic activity">
    <reaction evidence="2">
        <text>L-selenocystathionine + H2O = L-selenocysteine + 2-oxobutanoate + NH4(+)</text>
        <dbReference type="Rhea" id="RHEA:31151"/>
        <dbReference type="ChEBI" id="CHEBI:15377"/>
        <dbReference type="ChEBI" id="CHEBI:16763"/>
        <dbReference type="ChEBI" id="CHEBI:28938"/>
        <dbReference type="ChEBI" id="CHEBI:57843"/>
        <dbReference type="ChEBI" id="CHEBI:62226"/>
    </reaction>
    <physiologicalReaction direction="left-to-right" evidence="2">
        <dbReference type="Rhea" id="RHEA:31152"/>
    </physiologicalReaction>
</comment>
<comment type="cofactor">
    <cofactor evidence="3">
        <name>pyridoxal 5'-phosphate</name>
        <dbReference type="ChEBI" id="CHEBI:597326"/>
    </cofactor>
</comment>
<comment type="pathway">
    <text evidence="3">Amino-acid biosynthesis; L-cysteine biosynthesis; L-cysteine from L-homocysteine and L-serine: step 2/2.</text>
</comment>
<comment type="subunit">
    <text evidence="3 4">Homotetramer (By similarity). Interacts with CALM in a calcium-dependent manner (By similarity).</text>
</comment>
<comment type="subcellular location">
    <subcellularLocation>
        <location evidence="1">Cytoplasm</location>
    </subcellularLocation>
</comment>
<comment type="similarity">
    <text evidence="5">Belongs to the trans-sulfuration enzymes family.</text>
</comment>
<feature type="chain" id="PRO_0000114750" description="Cystathionine gamma-lyase">
    <location>
        <begin position="1"/>
        <end position="405"/>
    </location>
</feature>
<feature type="binding site" evidence="1">
    <location>
        <position position="62"/>
    </location>
    <ligand>
        <name>substrate</name>
    </ligand>
</feature>
<feature type="binding site" evidence="1">
    <location>
        <position position="114"/>
    </location>
    <ligand>
        <name>substrate</name>
    </ligand>
</feature>
<feature type="binding site" evidence="1">
    <location>
        <position position="119"/>
    </location>
    <ligand>
        <name>substrate</name>
    </ligand>
</feature>
<feature type="binding site" evidence="1">
    <location>
        <position position="339"/>
    </location>
    <ligand>
        <name>substrate</name>
    </ligand>
</feature>
<feature type="modified residue" description="N6-(pyridoxal phosphate)lysine" evidence="3">
    <location>
        <position position="212"/>
    </location>
</feature>
<feature type="sequence conflict" description="In Ref. 2; AAW71993." evidence="5" ref="2">
    <original>D</original>
    <variation>N</variation>
    <location>
        <position position="405"/>
    </location>
</feature>
<reference key="1">
    <citation type="submission" date="2003-10" db="EMBL/GenBank/DDBJ databases">
        <title>Isolation and characterization of cDNA for macaque neurological disease genes.</title>
        <authorList>
            <person name="Kusuda J."/>
            <person name="Osada N."/>
            <person name="Tanuma R."/>
            <person name="Hirata M."/>
            <person name="Sugano S."/>
            <person name="Hashimoto K."/>
        </authorList>
    </citation>
    <scope>NUCLEOTIDE SEQUENCE [LARGE SCALE MRNA]</scope>
    <source>
        <tissue>Brain cortex</tissue>
    </source>
</reference>
<reference key="2">
    <citation type="submission" date="2005-01" db="EMBL/GenBank/DDBJ databases">
        <title>Dual effects of hydrogen sulphide on vascular system in anesthesized monkeys in vivo and cloning, characterization of cystathionine-gamma-lyase.</title>
        <authorList>
            <person name="Zhu Y.Z."/>
            <person name="Wang Z.J."/>
            <person name="Ling L.H."/>
            <person name="Wei D."/>
            <person name="Zhu Y.C."/>
            <person name="Yang H."/>
            <person name="Huang S.H."/>
            <person name="Tan C.S."/>
            <person name="Tan B.J."/>
            <person name="Whiteman M."/>
            <person name="Moore P.K."/>
        </authorList>
    </citation>
    <scope>NUCLEOTIDE SEQUENCE [MRNA]</scope>
</reference>
<name>CGL_MACFA</name>
<organism>
    <name type="scientific">Macaca fascicularis</name>
    <name type="common">Crab-eating macaque</name>
    <name type="synonym">Cynomolgus monkey</name>
    <dbReference type="NCBI Taxonomy" id="9541"/>
    <lineage>
        <taxon>Eukaryota</taxon>
        <taxon>Metazoa</taxon>
        <taxon>Chordata</taxon>
        <taxon>Craniata</taxon>
        <taxon>Vertebrata</taxon>
        <taxon>Euteleostomi</taxon>
        <taxon>Mammalia</taxon>
        <taxon>Eutheria</taxon>
        <taxon>Euarchontoglires</taxon>
        <taxon>Primates</taxon>
        <taxon>Haplorrhini</taxon>
        <taxon>Catarrhini</taxon>
        <taxon>Cercopithecidae</taxon>
        <taxon>Cercopithecinae</taxon>
        <taxon>Macaca</taxon>
    </lineage>
</organism>
<dbReference type="EC" id="4.4.1.1" evidence="3"/>
<dbReference type="EC" id="4.4.1.2" evidence="3"/>
<dbReference type="EMBL" id="AB125160">
    <property type="protein sequence ID" value="BAD51948.1"/>
    <property type="molecule type" value="mRNA"/>
</dbReference>
<dbReference type="EMBL" id="AY879312">
    <property type="protein sequence ID" value="AAW71993.1"/>
    <property type="molecule type" value="mRNA"/>
</dbReference>
<dbReference type="RefSeq" id="NP_001306395.1">
    <property type="nucleotide sequence ID" value="NM_001319466.1"/>
</dbReference>
<dbReference type="RefSeq" id="XP_005595733.2">
    <property type="nucleotide sequence ID" value="XM_005595676.2"/>
</dbReference>
<dbReference type="SMR" id="Q60HG7"/>
<dbReference type="STRING" id="9541.ENSMFAP00000007031"/>
<dbReference type="eggNOG" id="KOG0053">
    <property type="taxonomic scope" value="Eukaryota"/>
</dbReference>
<dbReference type="OrthoDB" id="3512640at2759"/>
<dbReference type="UniPathway" id="UPA00136">
    <property type="reaction ID" value="UER00202"/>
</dbReference>
<dbReference type="Proteomes" id="UP000233100">
    <property type="component" value="Unplaced"/>
</dbReference>
<dbReference type="GO" id="GO:0005737">
    <property type="term" value="C:cytoplasm"/>
    <property type="evidence" value="ECO:0007669"/>
    <property type="project" value="UniProtKB-SubCell"/>
</dbReference>
<dbReference type="GO" id="GO:0005516">
    <property type="term" value="F:calmodulin binding"/>
    <property type="evidence" value="ECO:0007669"/>
    <property type="project" value="UniProtKB-KW"/>
</dbReference>
<dbReference type="GO" id="GO:0004123">
    <property type="term" value="F:cystathionine gamma-lyase activity"/>
    <property type="evidence" value="ECO:0000250"/>
    <property type="project" value="UniProtKB"/>
</dbReference>
<dbReference type="GO" id="GO:0047982">
    <property type="term" value="F:homocysteine desulfhydrase activity"/>
    <property type="evidence" value="ECO:0007669"/>
    <property type="project" value="RHEA"/>
</dbReference>
<dbReference type="GO" id="GO:0080146">
    <property type="term" value="F:L-cysteine desulfhydrase activity"/>
    <property type="evidence" value="ECO:0007669"/>
    <property type="project" value="RHEA"/>
</dbReference>
<dbReference type="GO" id="GO:0044540">
    <property type="term" value="F:L-cystine L-cysteine-lyase (deaminating)"/>
    <property type="evidence" value="ECO:0000250"/>
    <property type="project" value="UniProtKB"/>
</dbReference>
<dbReference type="GO" id="GO:0030170">
    <property type="term" value="F:pyridoxal phosphate binding"/>
    <property type="evidence" value="ECO:0000250"/>
    <property type="project" value="UniProtKB"/>
</dbReference>
<dbReference type="GO" id="GO:0098606">
    <property type="term" value="F:selenocystathionine gamma-lyase activity"/>
    <property type="evidence" value="ECO:0007669"/>
    <property type="project" value="RHEA"/>
</dbReference>
<dbReference type="GO" id="GO:0019344">
    <property type="term" value="P:cysteine biosynthetic process"/>
    <property type="evidence" value="ECO:0000250"/>
    <property type="project" value="UniProtKB"/>
</dbReference>
<dbReference type="GO" id="GO:0019343">
    <property type="term" value="P:cysteine biosynthetic process via cystathionine"/>
    <property type="evidence" value="ECO:0007669"/>
    <property type="project" value="TreeGrafter"/>
</dbReference>
<dbReference type="GO" id="GO:0070814">
    <property type="term" value="P:hydrogen sulfide biosynthetic process"/>
    <property type="evidence" value="ECO:0000250"/>
    <property type="project" value="UniProtKB"/>
</dbReference>
<dbReference type="GO" id="GO:0006629">
    <property type="term" value="P:lipid metabolic process"/>
    <property type="evidence" value="ECO:0007669"/>
    <property type="project" value="UniProtKB-KW"/>
</dbReference>
<dbReference type="GO" id="GO:0043066">
    <property type="term" value="P:negative regulation of apoptotic process"/>
    <property type="evidence" value="ECO:0000250"/>
    <property type="project" value="UniProtKB"/>
</dbReference>
<dbReference type="GO" id="GO:0043123">
    <property type="term" value="P:positive regulation of canonical NF-kappaB signal transduction"/>
    <property type="evidence" value="ECO:0000250"/>
    <property type="project" value="UniProtKB"/>
</dbReference>
<dbReference type="GO" id="GO:0051092">
    <property type="term" value="P:positive regulation of NF-kappaB transcription factor activity"/>
    <property type="evidence" value="ECO:0000250"/>
    <property type="project" value="UniProtKB"/>
</dbReference>
<dbReference type="GO" id="GO:0044524">
    <property type="term" value="P:protein sulfhydration"/>
    <property type="evidence" value="ECO:0000250"/>
    <property type="project" value="UniProtKB"/>
</dbReference>
<dbReference type="GO" id="GO:0018272">
    <property type="term" value="P:protein-pyridoxal-5-phosphate linkage via peptidyl-N6-pyridoxal phosphate-L-lysine"/>
    <property type="evidence" value="ECO:0000250"/>
    <property type="project" value="UniProtKB"/>
</dbReference>
<dbReference type="GO" id="GO:0019346">
    <property type="term" value="P:transsulfuration"/>
    <property type="evidence" value="ECO:0007669"/>
    <property type="project" value="InterPro"/>
</dbReference>
<dbReference type="CDD" id="cd00614">
    <property type="entry name" value="CGS_like"/>
    <property type="match status" value="1"/>
</dbReference>
<dbReference type="FunFam" id="3.90.1150.10:FF:000008">
    <property type="entry name" value="Cystathionine gamma-synthase"/>
    <property type="match status" value="1"/>
</dbReference>
<dbReference type="FunFam" id="3.40.640.10:FF:000009">
    <property type="entry name" value="Cystathionine gamma-synthase homolog"/>
    <property type="match status" value="1"/>
</dbReference>
<dbReference type="Gene3D" id="3.90.1150.10">
    <property type="entry name" value="Aspartate Aminotransferase, domain 1"/>
    <property type="match status" value="1"/>
</dbReference>
<dbReference type="Gene3D" id="3.40.640.10">
    <property type="entry name" value="Type I PLP-dependent aspartate aminotransferase-like (Major domain)"/>
    <property type="match status" value="1"/>
</dbReference>
<dbReference type="InterPro" id="IPR000277">
    <property type="entry name" value="Cys/Met-Metab_PyrdxlP-dep_enz"/>
</dbReference>
<dbReference type="InterPro" id="IPR054542">
    <property type="entry name" value="Cys_met_metab_PP"/>
</dbReference>
<dbReference type="InterPro" id="IPR015424">
    <property type="entry name" value="PyrdxlP-dep_Trfase"/>
</dbReference>
<dbReference type="InterPro" id="IPR015421">
    <property type="entry name" value="PyrdxlP-dep_Trfase_major"/>
</dbReference>
<dbReference type="InterPro" id="IPR015422">
    <property type="entry name" value="PyrdxlP-dep_Trfase_small"/>
</dbReference>
<dbReference type="PANTHER" id="PTHR11808:SF15">
    <property type="entry name" value="CYSTATHIONINE GAMMA-LYASE"/>
    <property type="match status" value="1"/>
</dbReference>
<dbReference type="PANTHER" id="PTHR11808">
    <property type="entry name" value="TRANS-SULFURATION ENZYME FAMILY MEMBER"/>
    <property type="match status" value="1"/>
</dbReference>
<dbReference type="Pfam" id="PF01053">
    <property type="entry name" value="Cys_Met_Meta_PP"/>
    <property type="match status" value="1"/>
</dbReference>
<dbReference type="PIRSF" id="PIRSF001434">
    <property type="entry name" value="CGS"/>
    <property type="match status" value="1"/>
</dbReference>
<dbReference type="SUPFAM" id="SSF53383">
    <property type="entry name" value="PLP-dependent transferases"/>
    <property type="match status" value="1"/>
</dbReference>
<dbReference type="PROSITE" id="PS00868">
    <property type="entry name" value="CYS_MET_METAB_PP"/>
    <property type="match status" value="1"/>
</dbReference>
<evidence type="ECO:0000250" key="1"/>
<evidence type="ECO:0000250" key="2">
    <source>
        <dbReference type="UniProtKB" id="P18757"/>
    </source>
</evidence>
<evidence type="ECO:0000250" key="3">
    <source>
        <dbReference type="UniProtKB" id="P32929"/>
    </source>
</evidence>
<evidence type="ECO:0000250" key="4">
    <source>
        <dbReference type="UniProtKB" id="Q8VCN5"/>
    </source>
</evidence>
<evidence type="ECO:0000305" key="5"/>
<proteinExistence type="evidence at transcript level"/>
<accession>Q60HG7</accession>
<accession>Q5EIB5</accession>